<organismHost>
    <name type="scientific">Gallus gallus</name>
    <name type="common">Chicken</name>
    <dbReference type="NCBI Taxonomy" id="9031"/>
</organismHost>
<name>NCAP_IBVDE</name>
<protein>
    <recommendedName>
        <fullName evidence="1">Nucleoprotein</fullName>
    </recommendedName>
    <alternativeName>
        <fullName evidence="1">Nucleocapsid protein</fullName>
        <shortName evidence="1">NC</shortName>
        <shortName evidence="1">Protein N</shortName>
    </alternativeName>
</protein>
<evidence type="ECO:0000255" key="1">
    <source>
        <dbReference type="HAMAP-Rule" id="MF_04097"/>
    </source>
</evidence>
<evidence type="ECO:0000255" key="2">
    <source>
        <dbReference type="PROSITE-ProRule" id="PRU01276"/>
    </source>
</evidence>
<evidence type="ECO:0000255" key="3">
    <source>
        <dbReference type="PROSITE-ProRule" id="PRU01277"/>
    </source>
</evidence>
<evidence type="ECO:0000256" key="4">
    <source>
        <dbReference type="SAM" id="MobiDB-lite"/>
    </source>
</evidence>
<feature type="chain" id="PRO_0000105980" description="Nucleoprotein">
    <location>
        <begin position="1"/>
        <end position="409"/>
    </location>
</feature>
<feature type="domain" description="CoV N NTD" evidence="2">
    <location>
        <begin position="31"/>
        <end position="156"/>
    </location>
</feature>
<feature type="domain" description="CoV N CTD" evidence="3">
    <location>
        <begin position="215"/>
        <end position="331"/>
    </location>
</feature>
<feature type="region of interest" description="Disordered" evidence="4">
    <location>
        <begin position="1"/>
        <end position="32"/>
    </location>
</feature>
<feature type="region of interest" description="RNA-binding" evidence="1">
    <location>
        <begin position="29"/>
        <end position="160"/>
    </location>
</feature>
<feature type="region of interest" description="Disordered" evidence="4">
    <location>
        <begin position="44"/>
        <end position="69"/>
    </location>
</feature>
<feature type="region of interest" description="Disordered" evidence="4">
    <location>
        <begin position="121"/>
        <end position="145"/>
    </location>
</feature>
<feature type="region of interest" description="Disordered" evidence="4">
    <location>
        <begin position="164"/>
        <end position="195"/>
    </location>
</feature>
<feature type="region of interest" description="Dimerization" evidence="1">
    <location>
        <begin position="226"/>
        <end position="333"/>
    </location>
</feature>
<feature type="region of interest" description="Disordered" evidence="4">
    <location>
        <begin position="238"/>
        <end position="259"/>
    </location>
</feature>
<feature type="region of interest" description="Disordered" evidence="4">
    <location>
        <begin position="326"/>
        <end position="409"/>
    </location>
</feature>
<feature type="compositionally biased region" description="Low complexity" evidence="4">
    <location>
        <begin position="15"/>
        <end position="31"/>
    </location>
</feature>
<feature type="compositionally biased region" description="Low complexity" evidence="4">
    <location>
        <begin position="164"/>
        <end position="179"/>
    </location>
</feature>
<feature type="compositionally biased region" description="Basic and acidic residues" evidence="4">
    <location>
        <begin position="180"/>
        <end position="192"/>
    </location>
</feature>
<feature type="compositionally biased region" description="Basic and acidic residues" evidence="4">
    <location>
        <begin position="247"/>
        <end position="259"/>
    </location>
</feature>
<feature type="compositionally biased region" description="Low complexity" evidence="4">
    <location>
        <begin position="341"/>
        <end position="358"/>
    </location>
</feature>
<feature type="compositionally biased region" description="Basic and acidic residues" evidence="4">
    <location>
        <begin position="368"/>
        <end position="384"/>
    </location>
</feature>
<feature type="modified residue" description="Phosphoserine; by host" evidence="1">
    <location>
        <position position="190"/>
    </location>
</feature>
<feature type="modified residue" description="Phosphoserine; by host" evidence="1">
    <location>
        <position position="192"/>
    </location>
</feature>
<feature type="modified residue" description="Phosphothreonine; by host" evidence="1">
    <location>
        <position position="378"/>
    </location>
</feature>
<feature type="modified residue" description="Phosphoserine; by host" evidence="1">
    <location>
        <position position="379"/>
    </location>
</feature>
<feature type="disulfide bond" evidence="1">
    <location>
        <begin position="320"/>
        <end position="323"/>
    </location>
</feature>
<keyword id="KW-0013">ADP-ribosylation</keyword>
<keyword id="KW-1015">Disulfide bond</keyword>
<keyword id="KW-1040">Host Golgi apparatus</keyword>
<keyword id="KW-0597">Phosphoprotein</keyword>
<keyword id="KW-0687">Ribonucleoprotein</keyword>
<keyword id="KW-0694">RNA-binding</keyword>
<keyword id="KW-0804">Transcription</keyword>
<keyword id="KW-0805">Transcription regulation</keyword>
<keyword id="KW-0543">Viral nucleoprotein</keyword>
<keyword id="KW-0946">Virion</keyword>
<proteinExistence type="inferred from homology"/>
<reference key="1">
    <citation type="journal article" date="2000" name="Arch. Virol.">
        <title>Evidence of genetic diversity generated by recombination among avian coronavirus IBV.</title>
        <authorList>
            <person name="Lee C.-W."/>
            <person name="Jackwood M.W."/>
        </authorList>
    </citation>
    <scope>NUCLEOTIDE SEQUENCE [GENOMIC RNA]</scope>
</reference>
<comment type="function">
    <text evidence="1">Packages the positive strand viral genome RNA into a helical ribonucleocapsid (RNP) and plays a fundamental role during virion assembly through its interactions with the viral genome and membrane protein M. Plays an important role in enhancing the efficiency of subgenomic viral RNA transcription as well as viral replication.</text>
</comment>
<comment type="subunit">
    <text evidence="1">Homooligomer. Both monomeric and oligomeric forms interact with RNA. Interacts with protein M. Interacts with NSP3; this interaction serves to tether the genome to the newly translated replicase-transcriptase complex at a very early stage of infection.</text>
</comment>
<comment type="subcellular location">
    <subcellularLocation>
        <location evidence="1">Virion</location>
    </subcellularLocation>
    <subcellularLocation>
        <location evidence="1">Host endoplasmic reticulum-Golgi intermediate compartment</location>
    </subcellularLocation>
    <subcellularLocation>
        <location evidence="1">Host Golgi apparatus</location>
    </subcellularLocation>
    <text evidence="1">Located inside the virion, complexed with the viral RNA. Probably associates with ER-derived membranes where it participates in viral RNA synthesis and virus budding.</text>
</comment>
<comment type="PTM">
    <text evidence="1">ADP-ribosylated. The ADP-ribosylation is retained in the virion during infection.</text>
</comment>
<comment type="PTM">
    <text evidence="1">Phosphorylated on serine and threonine residues.</text>
</comment>
<comment type="similarity">
    <text evidence="1">Belongs to the gammacoronavirus nucleocapsid protein family.</text>
</comment>
<gene>
    <name evidence="1" type="primary">N</name>
    <name type="ORF">6</name>
</gene>
<sequence length="409" mass="45018">MASGKATGKTDAPAPVIKLGGPKPPKVGSSGNASWFQAIKAKKLNSPQPKFEGSGVPDNENLKTSQQHGYWRRQLRFKPSKGGRKPVPDAWYFYYTGTGPAADLNWGDSQDGIVWVAAKGADVKSRSNQGTRDPDKFDQYPLRFSDGGPDGNFRWDFIPLNRGRSGRSTAASSAASSRAPSRDGSRGRRSGSEGDLIARAAKIIQDQQKRGSRITKAKADEMAHRRYCKRTIPPGYKVDQVFGPRTKGKEGNFGDDKMNEEGIKDGRVTAMLNLVPSSHACLFGSRVTPKLQPDGLHLKIEFTTVVSRDDPQFDNYVKICDQCVDGVGTRPKDDEPRPKSRSSSRPATRTSSPALRQQPQKKEKKPKKQDDEVDKALTSDEERNNAQLEFDDEPKVINWGDSALGENEL</sequence>
<dbReference type="EMBL" id="AF203001">
    <property type="protein sequence ID" value="AAF69116.1"/>
    <property type="molecule type" value="Genomic_RNA"/>
</dbReference>
<dbReference type="SMR" id="Q9J4B0"/>
<dbReference type="GO" id="GO:0044172">
    <property type="term" value="C:host cell endoplasmic reticulum-Golgi intermediate compartment"/>
    <property type="evidence" value="ECO:0007669"/>
    <property type="project" value="UniProtKB-SubCell"/>
</dbReference>
<dbReference type="GO" id="GO:0044177">
    <property type="term" value="C:host cell Golgi apparatus"/>
    <property type="evidence" value="ECO:0007669"/>
    <property type="project" value="UniProtKB-SubCell"/>
</dbReference>
<dbReference type="GO" id="GO:1990904">
    <property type="term" value="C:ribonucleoprotein complex"/>
    <property type="evidence" value="ECO:0007669"/>
    <property type="project" value="UniProtKB-KW"/>
</dbReference>
<dbReference type="GO" id="GO:0019013">
    <property type="term" value="C:viral nucleocapsid"/>
    <property type="evidence" value="ECO:0007669"/>
    <property type="project" value="UniProtKB-UniRule"/>
</dbReference>
<dbReference type="GO" id="GO:0003723">
    <property type="term" value="F:RNA binding"/>
    <property type="evidence" value="ECO:0007669"/>
    <property type="project" value="UniProtKB-UniRule"/>
</dbReference>
<dbReference type="CDD" id="cd21595">
    <property type="entry name" value="CoV_N-CTD"/>
    <property type="match status" value="1"/>
</dbReference>
<dbReference type="CDD" id="cd21554">
    <property type="entry name" value="CoV_N-NTD"/>
    <property type="match status" value="1"/>
</dbReference>
<dbReference type="HAMAP" id="MF_04097">
    <property type="entry name" value="GAMMA_CORONA_NCAP"/>
    <property type="match status" value="1"/>
</dbReference>
<dbReference type="InterPro" id="IPR044344">
    <property type="entry name" value="N_prot_C_CoV"/>
</dbReference>
<dbReference type="InterPro" id="IPR044345">
    <property type="entry name" value="N_prot_N_CoV"/>
</dbReference>
<dbReference type="InterPro" id="IPR042547">
    <property type="entry name" value="NCAP_gCoV"/>
</dbReference>
<dbReference type="InterPro" id="IPR001218">
    <property type="entry name" value="Nucleocap_CoV"/>
</dbReference>
<dbReference type="InterPro" id="IPR037179">
    <property type="entry name" value="Nucleocapsid_C"/>
</dbReference>
<dbReference type="InterPro" id="IPR037195">
    <property type="entry name" value="Nucleocapsid_N"/>
</dbReference>
<dbReference type="Pfam" id="PF00937">
    <property type="entry name" value="CoV_nucleocap"/>
    <property type="match status" value="1"/>
</dbReference>
<dbReference type="PIRSF" id="PIRSF003888">
    <property type="entry name" value="Corona_nucleocap"/>
    <property type="match status" value="1"/>
</dbReference>
<dbReference type="SUPFAM" id="SSF110304">
    <property type="entry name" value="Coronavirus RNA-binding domain"/>
    <property type="match status" value="1"/>
</dbReference>
<dbReference type="SUPFAM" id="SSF103068">
    <property type="entry name" value="Nucleocapsid protein dimerization domain"/>
    <property type="match status" value="1"/>
</dbReference>
<dbReference type="PROSITE" id="PS51929">
    <property type="entry name" value="COV_N_CTD"/>
    <property type="match status" value="1"/>
</dbReference>
<dbReference type="PROSITE" id="PS51928">
    <property type="entry name" value="COV_N_NTD"/>
    <property type="match status" value="1"/>
</dbReference>
<accession>Q9J4B0</accession>
<organism>
    <name type="scientific">Avian infectious bronchitis virus (strain DE072)</name>
    <name type="common">IBV</name>
    <dbReference type="NCBI Taxonomy" id="233265"/>
    <lineage>
        <taxon>Viruses</taxon>
        <taxon>Riboviria</taxon>
        <taxon>Orthornavirae</taxon>
        <taxon>Pisuviricota</taxon>
        <taxon>Pisoniviricetes</taxon>
        <taxon>Nidovirales</taxon>
        <taxon>Cornidovirineae</taxon>
        <taxon>Coronaviridae</taxon>
        <taxon>Orthocoronavirinae</taxon>
        <taxon>Gammacoronavirus</taxon>
        <taxon>Igacovirus</taxon>
        <taxon>Avian coronavirus</taxon>
    </lineage>
</organism>